<accession>Q9QJ25</accession>
<keyword id="KW-1185">Reference proteome</keyword>
<gene>
    <name type="primary">U58</name>
</gene>
<organism>
    <name type="scientific">Human herpesvirus 6B (strain Z29)</name>
    <name type="common">HHV-6 variant B</name>
    <name type="synonym">Human B lymphotropic virus</name>
    <dbReference type="NCBI Taxonomy" id="36351"/>
    <lineage>
        <taxon>Viruses</taxon>
        <taxon>Duplodnaviria</taxon>
        <taxon>Heunggongvirae</taxon>
        <taxon>Peploviricota</taxon>
        <taxon>Herviviricetes</taxon>
        <taxon>Herpesvirales</taxon>
        <taxon>Orthoherpesviridae</taxon>
        <taxon>Betaherpesvirinae</taxon>
        <taxon>Roseolovirus</taxon>
        <taxon>Roseolovirus humanbeta6b</taxon>
        <taxon>Human herpesvirus 6B</taxon>
    </lineage>
</organism>
<reference key="1">
    <citation type="journal article" date="1999" name="J. Virol.">
        <title>Human herpesvirus 6B genome sequence: coding content and comparison with human herpesvirus 6A.</title>
        <authorList>
            <person name="Dominguez G."/>
            <person name="Dambaugh T.R."/>
            <person name="Stamey F.R."/>
            <person name="Dewhurst S."/>
            <person name="Inoue N."/>
            <person name="Pellett P.E."/>
        </authorList>
    </citation>
    <scope>NUCLEOTIDE SEQUENCE [LARGE SCALE GENOMIC DNA]</scope>
</reference>
<protein>
    <recommendedName>
        <fullName>Protein U58</fullName>
    </recommendedName>
</protein>
<comment type="similarity">
    <text evidence="1">Belongs to the herpesviridae UL87 family.</text>
</comment>
<organismHost>
    <name type="scientific">Homo sapiens</name>
    <name type="common">Human</name>
    <dbReference type="NCBI Taxonomy" id="9606"/>
</organismHost>
<sequence length="772" mass="88709">MQHTGNCETLIVNSCFGSTCARSIPVFIDSCDLTAEVSRDEETRLARSVPVVLEKIESIIEKIFQTSGPNIVHDKDRAKIALCRLLLGPVAVPCFCEEWDTNDYLSKSGCKCLGPILYIHTSRCRCSDIPVFKFSIMKDYYASHVFRGLLSLKEWNTHLPNVLCTCELSMSDRYVATVFPKQNSIYLEYYPYFLCYLCRYLTVIEIEQCTNDLISLLGPKVAQRVIIHFKLLFGFRHKPHMGTVDSWFWENFFMLELHKLWLTVVKHNRVTTDFFNVVYEKIQNYKQYAIKTLRMSSKAVPAIQRFCLAKFKQQLLYLNIKVTVKKNKRELCLNGFVYGKTLYVVESSQLIFRNLLLLYYDYSLPDECKTKEENVLTTHYIRVISRLSFKQSRSAVPPGVKPDFTFVAQLPKRKELPNVPGGIDFAEITSVRHGAVILNAFNTNKVMNLKATISKRANFVYHRIPKTMTHSFVMYKHTFKEPAFTVSTFVSNDDLDMSSLNINIRGPYCDFLYALGVYKMHVSIQDLFLPAFVCNSNNSVDLQGLEDQDVVRNRKKKVYWITNFPCMISNANKVNVGWFKAGTGIIPRVSGKDLQNVLLQELNNVREIPGLVFDMDLHQLLVLLEQRNLHQIPFLVKQFLIFLRLGLLMGYGNSRRNKVHDIMLHLISNGLFDFNKNSVANTKIKHGCALVGTRLANNVPKIIARQKKMKLDHMGRNANSLAVLRFIVKSGEHKNKTVFIKLLEYLAETSTAINTRNEVARLLLTLTTNMKT</sequence>
<proteinExistence type="inferred from homology"/>
<name>UL87_HHV6Z</name>
<dbReference type="EMBL" id="AF157706">
    <property type="protein sequence ID" value="AAD49661.1"/>
    <property type="molecule type" value="Genomic_DNA"/>
</dbReference>
<dbReference type="RefSeq" id="NP_050239.1">
    <property type="nucleotide sequence ID" value="NC_000898.1"/>
</dbReference>
<dbReference type="DNASU" id="1497060"/>
<dbReference type="GeneID" id="1497060"/>
<dbReference type="KEGG" id="vg:1497060"/>
<dbReference type="Proteomes" id="UP000006930">
    <property type="component" value="Segment"/>
</dbReference>
<dbReference type="InterPro" id="IPR004285">
    <property type="entry name" value="Herpes_UL87_C"/>
</dbReference>
<dbReference type="InterPro" id="IPR007618">
    <property type="entry name" value="Herpes_UL87_N"/>
</dbReference>
<dbReference type="Pfam" id="PF04532">
    <property type="entry name" value="DUF587"/>
    <property type="match status" value="1"/>
</dbReference>
<dbReference type="Pfam" id="PF03043">
    <property type="entry name" value="Herpes_UL87"/>
    <property type="match status" value="1"/>
</dbReference>
<feature type="chain" id="PRO_0000408439" description="Protein U58">
    <location>
        <begin position="1"/>
        <end position="772"/>
    </location>
</feature>
<evidence type="ECO:0000305" key="1"/>